<dbReference type="EC" id="2.4.2.60" evidence="1"/>
<dbReference type="EMBL" id="AAXH01000627">
    <property type="status" value="NOT_ANNOTATED_CDS"/>
    <property type="molecule type" value="Genomic_DNA"/>
</dbReference>
<dbReference type="RefSeq" id="XP_018248086.1">
    <property type="nucleotide sequence ID" value="XM_018389758.1"/>
</dbReference>
<dbReference type="RefSeq" id="XP_018248087.1">
    <property type="nucleotide sequence ID" value="XM_018389759.1"/>
</dbReference>
<dbReference type="RefSeq" id="XP_018248088.1">
    <property type="nucleotide sequence ID" value="XM_018389760.1"/>
</dbReference>
<dbReference type="RefSeq" id="XP_018248089.1">
    <property type="nucleotide sequence ID" value="XM_018389761.1"/>
</dbReference>
<dbReference type="RefSeq" id="XP_018248090.1">
    <property type="nucleotide sequence ID" value="XM_018389762.1"/>
</dbReference>
<dbReference type="RefSeq" id="XP_018248091.1">
    <property type="nucleotide sequence ID" value="XM_018389763.1"/>
</dbReference>
<dbReference type="RefSeq" id="XP_018248092.1">
    <property type="nucleotide sequence ID" value="XM_018389764.1"/>
</dbReference>
<dbReference type="SMR" id="J9N5G7"/>
<dbReference type="STRING" id="426428.J9N5G7"/>
<dbReference type="EnsemblFungi" id="FOXG_10428T0">
    <property type="protein sequence ID" value="FOXG_10428P0"/>
    <property type="gene ID" value="FOXG_10428"/>
</dbReference>
<dbReference type="GeneID" id="28951907"/>
<dbReference type="KEGG" id="fox:FOXG_10428"/>
<dbReference type="VEuPathDB" id="FungiDB:FOXG_10428"/>
<dbReference type="HOGENOM" id="CLU_053727_0_0_1"/>
<dbReference type="GO" id="GO:0005829">
    <property type="term" value="C:cytosol"/>
    <property type="evidence" value="ECO:0007669"/>
    <property type="project" value="UniProtKB-UniRule"/>
</dbReference>
<dbReference type="GO" id="GO:0005634">
    <property type="term" value="C:nucleus"/>
    <property type="evidence" value="ECO:0007669"/>
    <property type="project" value="UniProtKB-SubCell"/>
</dbReference>
<dbReference type="GO" id="GO:0160205">
    <property type="term" value="F:cysteine-dependent adenosine diphosphate thiazole synthase activity"/>
    <property type="evidence" value="ECO:0007669"/>
    <property type="project" value="UniProtKB-EC"/>
</dbReference>
<dbReference type="GO" id="GO:0008198">
    <property type="term" value="F:ferrous iron binding"/>
    <property type="evidence" value="ECO:0007669"/>
    <property type="project" value="EnsemblFungi"/>
</dbReference>
<dbReference type="GO" id="GO:0000002">
    <property type="term" value="P:mitochondrial genome maintenance"/>
    <property type="evidence" value="ECO:0007669"/>
    <property type="project" value="EnsemblFungi"/>
</dbReference>
<dbReference type="GO" id="GO:0009228">
    <property type="term" value="P:thiamine biosynthetic process"/>
    <property type="evidence" value="ECO:0007669"/>
    <property type="project" value="UniProtKB-UniRule"/>
</dbReference>
<dbReference type="GO" id="GO:0052837">
    <property type="term" value="P:thiazole biosynthetic process"/>
    <property type="evidence" value="ECO:0007669"/>
    <property type="project" value="UniProtKB-UniRule"/>
</dbReference>
<dbReference type="Gene3D" id="6.10.250.2840">
    <property type="match status" value="1"/>
</dbReference>
<dbReference type="Gene3D" id="3.50.50.60">
    <property type="entry name" value="FAD/NAD(P)-binding domain"/>
    <property type="match status" value="1"/>
</dbReference>
<dbReference type="HAMAP" id="MF_03158">
    <property type="entry name" value="THI4"/>
    <property type="match status" value="1"/>
</dbReference>
<dbReference type="InterPro" id="IPR036188">
    <property type="entry name" value="FAD/NAD-bd_sf"/>
</dbReference>
<dbReference type="InterPro" id="IPR027495">
    <property type="entry name" value="Sti35"/>
</dbReference>
<dbReference type="InterPro" id="IPR002922">
    <property type="entry name" value="Thi4_fam"/>
</dbReference>
<dbReference type="NCBIfam" id="TIGR00292">
    <property type="entry name" value="sulfide-dependent adenosine diphosphate thiazole synthase"/>
    <property type="match status" value="1"/>
</dbReference>
<dbReference type="PANTHER" id="PTHR43422">
    <property type="entry name" value="THIAMINE THIAZOLE SYNTHASE"/>
    <property type="match status" value="1"/>
</dbReference>
<dbReference type="PANTHER" id="PTHR43422:SF3">
    <property type="entry name" value="THIAMINE THIAZOLE SYNTHASE"/>
    <property type="match status" value="1"/>
</dbReference>
<dbReference type="Pfam" id="PF01946">
    <property type="entry name" value="Thi4"/>
    <property type="match status" value="1"/>
</dbReference>
<dbReference type="SUPFAM" id="SSF51905">
    <property type="entry name" value="FAD/NAD(P)-binding domain"/>
    <property type="match status" value="1"/>
</dbReference>
<proteinExistence type="inferred from homology"/>
<name>THI4_FUSO4</name>
<organism>
    <name type="scientific">Fusarium oxysporum f. sp. lycopersici (strain 4287 / CBS 123668 / FGSC 9935 / NRRL 34936)</name>
    <name type="common">Fusarium vascular wilt of tomato</name>
    <dbReference type="NCBI Taxonomy" id="426428"/>
    <lineage>
        <taxon>Eukaryota</taxon>
        <taxon>Fungi</taxon>
        <taxon>Dikarya</taxon>
        <taxon>Ascomycota</taxon>
        <taxon>Pezizomycotina</taxon>
        <taxon>Sordariomycetes</taxon>
        <taxon>Hypocreomycetidae</taxon>
        <taxon>Hypocreales</taxon>
        <taxon>Nectriaceae</taxon>
        <taxon>Fusarium</taxon>
        <taxon>Fusarium oxysporum species complex</taxon>
    </lineage>
</organism>
<protein>
    <recommendedName>
        <fullName evidence="1">Thiamine thiazole synthase</fullName>
        <ecNumber evidence="1">2.4.2.60</ecNumber>
    </recommendedName>
    <alternativeName>
        <fullName>Stress-inducible protein sti35</fullName>
    </alternativeName>
    <alternativeName>
        <fullName evidence="1">Thiazole biosynthetic enzyme</fullName>
    </alternativeName>
</protein>
<feature type="chain" id="PRO_0000423475" description="Thiamine thiazole synthase">
    <location>
        <begin position="1"/>
        <end position="320"/>
    </location>
</feature>
<feature type="binding site" evidence="1">
    <location>
        <position position="82"/>
    </location>
    <ligand>
        <name>substrate</name>
    </ligand>
</feature>
<feature type="binding site" evidence="1">
    <location>
        <begin position="103"/>
        <end position="104"/>
    </location>
    <ligand>
        <name>substrate</name>
    </ligand>
</feature>
<feature type="binding site" evidence="1">
    <location>
        <position position="111"/>
    </location>
    <ligand>
        <name>substrate</name>
    </ligand>
</feature>
<feature type="binding site" evidence="1">
    <location>
        <position position="176"/>
    </location>
    <ligand>
        <name>substrate</name>
    </ligand>
</feature>
<feature type="binding site" evidence="1">
    <location>
        <position position="211"/>
    </location>
    <ligand>
        <name>substrate</name>
    </ligand>
</feature>
<feature type="binding site" evidence="1">
    <location>
        <position position="226"/>
    </location>
    <ligand>
        <name>substrate</name>
    </ligand>
</feature>
<feature type="binding site" evidence="1">
    <location>
        <position position="278"/>
    </location>
    <ligand>
        <name>substrate</name>
    </ligand>
</feature>
<feature type="binding site" evidence="1">
    <location>
        <begin position="288"/>
        <end position="290"/>
    </location>
    <ligand>
        <name>substrate</name>
    </ligand>
</feature>
<feature type="modified residue" description="2,3-didehydroalanine (Cys)" evidence="1">
    <location>
        <position position="209"/>
    </location>
</feature>
<reference key="1">
    <citation type="journal article" date="2010" name="Nature">
        <title>Comparative genomics reveals mobile pathogenicity chromosomes in Fusarium.</title>
        <authorList>
            <person name="Ma L.-J."/>
            <person name="van der Does H.C."/>
            <person name="Borkovich K.A."/>
            <person name="Coleman J.J."/>
            <person name="Daboussi M.-J."/>
            <person name="Di Pietro A."/>
            <person name="Dufresne M."/>
            <person name="Freitag M."/>
            <person name="Grabherr M."/>
            <person name="Henrissat B."/>
            <person name="Houterman P.M."/>
            <person name="Kang S."/>
            <person name="Shim W.-B."/>
            <person name="Woloshuk C."/>
            <person name="Xie X."/>
            <person name="Xu J.-R."/>
            <person name="Antoniw J."/>
            <person name="Baker S.E."/>
            <person name="Bluhm B.H."/>
            <person name="Breakspear A."/>
            <person name="Brown D.W."/>
            <person name="Butchko R.A.E."/>
            <person name="Chapman S."/>
            <person name="Coulson R."/>
            <person name="Coutinho P.M."/>
            <person name="Danchin E.G.J."/>
            <person name="Diener A."/>
            <person name="Gale L.R."/>
            <person name="Gardiner D.M."/>
            <person name="Goff S."/>
            <person name="Hammond-Kosack K.E."/>
            <person name="Hilburn K."/>
            <person name="Hua-Van A."/>
            <person name="Jonkers W."/>
            <person name="Kazan K."/>
            <person name="Kodira C.D."/>
            <person name="Koehrsen M."/>
            <person name="Kumar L."/>
            <person name="Lee Y.-H."/>
            <person name="Li L."/>
            <person name="Manners J.M."/>
            <person name="Miranda-Saavedra D."/>
            <person name="Mukherjee M."/>
            <person name="Park G."/>
            <person name="Park J."/>
            <person name="Park S.-Y."/>
            <person name="Proctor R.H."/>
            <person name="Regev A."/>
            <person name="Ruiz-Roldan M.C."/>
            <person name="Sain D."/>
            <person name="Sakthikumar S."/>
            <person name="Sykes S."/>
            <person name="Schwartz D.C."/>
            <person name="Turgeon B.G."/>
            <person name="Wapinski I."/>
            <person name="Yoder O."/>
            <person name="Young S."/>
            <person name="Zeng Q."/>
            <person name="Zhou S."/>
            <person name="Galagan J."/>
            <person name="Cuomo C.A."/>
            <person name="Kistler H.C."/>
            <person name="Rep M."/>
        </authorList>
    </citation>
    <scope>NUCLEOTIDE SEQUENCE [LARGE SCALE GENOMIC DNA]</scope>
    <source>
        <strain>4287 / CBS 123668 / FGSC 9935 / NRRL 34936</strain>
    </source>
</reference>
<reference key="2">
    <citation type="journal article" date="2008" name="Fungal Genet. Biol.">
        <title>The Fusarium oxysporum sti35 gene functions in thiamine biosynthesis and oxidative stress response.</title>
        <authorList>
            <person name="Ruiz-Roldan C."/>
            <person name="Puerto-Galan L."/>
            <person name="Roa J."/>
            <person name="Castro A."/>
            <person name="Di Pietro A."/>
            <person name="Roncero M.I."/>
            <person name="Hera C."/>
        </authorList>
    </citation>
    <scope>FUNCTION</scope>
    <source>
        <strain>4287 / CBS 123668 / FGSC 9935 / NRRL 34936</strain>
    </source>
</reference>
<keyword id="KW-0963">Cytoplasm</keyword>
<keyword id="KW-0408">Iron</keyword>
<keyword id="KW-0479">Metal-binding</keyword>
<keyword id="KW-0520">NAD</keyword>
<keyword id="KW-0539">Nucleus</keyword>
<keyword id="KW-0784">Thiamine biosynthesis</keyword>
<keyword id="KW-0808">Transferase</keyword>
<accession>J9N5G7</accession>
<gene>
    <name type="primary">sti35</name>
    <name type="ORF">FOXG_10428</name>
</gene>
<comment type="function">
    <text evidence="1 2">Involved in biosynthesis of the thiamine precursor thiazole. Catalyzes the conversion of NAD and glycine to adenosine diphosphate 5-(2-hydroxyethyl)-4-methylthiazole-2-carboxylic acid (ADT), an adenylated thiazole intermediate. The reaction includes an iron-dependent sulfide transfer from a conserved cysteine residue of the protein to a thiazole intermediate. The enzyme can only undergo a single turnover, which suggests it is a suicide enzyme. May have additional roles in adaptation to various stress conditions and in DNA damage tolerance.</text>
</comment>
<comment type="catalytic activity">
    <reaction evidence="1">
        <text>[ADP-thiazole synthase]-L-cysteine + glycine + NAD(+) = [ADP-thiazole synthase]-dehydroalanine + ADP-5-ethyl-4-methylthiazole-2-carboxylate + nicotinamide + 3 H2O + 2 H(+)</text>
        <dbReference type="Rhea" id="RHEA:55708"/>
        <dbReference type="Rhea" id="RHEA-COMP:14264"/>
        <dbReference type="Rhea" id="RHEA-COMP:14265"/>
        <dbReference type="ChEBI" id="CHEBI:15377"/>
        <dbReference type="ChEBI" id="CHEBI:15378"/>
        <dbReference type="ChEBI" id="CHEBI:17154"/>
        <dbReference type="ChEBI" id="CHEBI:29950"/>
        <dbReference type="ChEBI" id="CHEBI:57305"/>
        <dbReference type="ChEBI" id="CHEBI:57540"/>
        <dbReference type="ChEBI" id="CHEBI:90873"/>
        <dbReference type="ChEBI" id="CHEBI:139151"/>
        <dbReference type="EC" id="2.4.2.60"/>
    </reaction>
</comment>
<comment type="cofactor">
    <cofactor evidence="1">
        <name>Fe cation</name>
        <dbReference type="ChEBI" id="CHEBI:24875"/>
    </cofactor>
    <text evidence="1">Binds 1 Fe cation per subunit.</text>
</comment>
<comment type="subunit">
    <text evidence="1">Homooctamer.</text>
</comment>
<comment type="subcellular location">
    <subcellularLocation>
        <location>Cytoplasm</location>
    </subcellularLocation>
    <subcellularLocation>
        <location evidence="1">Nucleus</location>
    </subcellularLocation>
</comment>
<comment type="PTM">
    <text evidence="1">During the catalytic reaction, a sulfide is transferred from Cys-209 to a reaction intermediate, generating a dehydroalanine residue.</text>
</comment>
<comment type="similarity">
    <text evidence="1">Belongs to the THI4 family.</text>
</comment>
<evidence type="ECO:0000255" key="1">
    <source>
        <dbReference type="HAMAP-Rule" id="MF_03158"/>
    </source>
</evidence>
<evidence type="ECO:0000269" key="2">
    <source>
    </source>
</evidence>
<sequence length="320" mass="34579">MAPPAAVSPPSRSAELATSTKLPVMSKNINTKTVEEMLGQWDDFKFAPIRESQVSRAMTRRYFQDLDNYAESDIVIIGAGSCGLSAAYILGKKRPDLKIAIIEASVSPGGGAWLGGQLFSAMIMRKPADAFLREVGVPYEDEGNYVVVKHAALFTSTIMSKVLQMPNIKLFNATCVEDLITRPSEEGVRIAGVVTNWTLVSMHHDDQSCMDPNTINAPLIISTTGHDGPMGAFCVKRLVSMQRIEKLGGMRGLDMNLAEDAIVKGTREIVPGLIVGGMELSEVDGANRMGPTFGAMALSGLKAAEEALKIFDTRKKQNDL</sequence>